<name>NUCS_RHOJR</name>
<sequence>MRLVIARCRVDYVGRLTAHLPTARRLLLIKADGSVSIHADDRAYKPLNWMSPPCWLVEDTVEDAEALWVVTNKAGEELRITIEEIEHDSSHELGVDPGLVKDGVEAHLQELLAEHVETLGSGYTLVRREYMTAIGPVDLLCRNADGASVAVEIKRRGDIDGVEQLTRYLELLNRDPLLAPVSGVFAAQQIKPQAKTLATDRGIRCLVLDYEALRGTESTEFRLF</sequence>
<comment type="function">
    <text evidence="1">Cleaves both 3' and 5' ssDNA extremities of branched DNA structures.</text>
</comment>
<comment type="subcellular location">
    <subcellularLocation>
        <location evidence="1">Cytoplasm</location>
    </subcellularLocation>
</comment>
<comment type="similarity">
    <text evidence="1">Belongs to the NucS endonuclease family.</text>
</comment>
<feature type="chain" id="PRO_1000045835" description="Endonuclease NucS">
    <location>
        <begin position="1"/>
        <end position="224"/>
    </location>
</feature>
<accession>Q0SGQ9</accession>
<evidence type="ECO:0000255" key="1">
    <source>
        <dbReference type="HAMAP-Rule" id="MF_00722"/>
    </source>
</evidence>
<keyword id="KW-0963">Cytoplasm</keyword>
<keyword id="KW-0238">DNA-binding</keyword>
<keyword id="KW-0255">Endonuclease</keyword>
<keyword id="KW-0378">Hydrolase</keyword>
<keyword id="KW-0540">Nuclease</keyword>
<gene>
    <name evidence="1" type="primary">nucS</name>
    <name type="ordered locus">RHA1_ro01459</name>
</gene>
<dbReference type="EC" id="3.1.-.-" evidence="1"/>
<dbReference type="EMBL" id="CP000431">
    <property type="protein sequence ID" value="ABG93277.1"/>
    <property type="molecule type" value="Genomic_DNA"/>
</dbReference>
<dbReference type="RefSeq" id="WP_005248359.1">
    <property type="nucleotide sequence ID" value="NC_008268.1"/>
</dbReference>
<dbReference type="SMR" id="Q0SGQ9"/>
<dbReference type="GeneID" id="69893131"/>
<dbReference type="KEGG" id="rha:RHA1_ro01459"/>
<dbReference type="eggNOG" id="COG1637">
    <property type="taxonomic scope" value="Bacteria"/>
</dbReference>
<dbReference type="HOGENOM" id="CLU_069350_0_0_11"/>
<dbReference type="OrthoDB" id="3344925at2"/>
<dbReference type="Proteomes" id="UP000008710">
    <property type="component" value="Chromosome"/>
</dbReference>
<dbReference type="GO" id="GO:0005737">
    <property type="term" value="C:cytoplasm"/>
    <property type="evidence" value="ECO:0007669"/>
    <property type="project" value="UniProtKB-SubCell"/>
</dbReference>
<dbReference type="GO" id="GO:0003677">
    <property type="term" value="F:DNA binding"/>
    <property type="evidence" value="ECO:0007669"/>
    <property type="project" value="UniProtKB-KW"/>
</dbReference>
<dbReference type="GO" id="GO:0000014">
    <property type="term" value="F:single-stranded DNA endodeoxyribonuclease activity"/>
    <property type="evidence" value="ECO:0007669"/>
    <property type="project" value="UniProtKB-UniRule"/>
</dbReference>
<dbReference type="CDD" id="cd22341">
    <property type="entry name" value="NucS-like"/>
    <property type="match status" value="1"/>
</dbReference>
<dbReference type="Gene3D" id="2.70.180.20">
    <property type="match status" value="1"/>
</dbReference>
<dbReference type="Gene3D" id="3.40.1350.10">
    <property type="match status" value="1"/>
</dbReference>
<dbReference type="HAMAP" id="MF_00722">
    <property type="entry name" value="NucS"/>
    <property type="match status" value="1"/>
</dbReference>
<dbReference type="InterPro" id="IPR002793">
    <property type="entry name" value="Endonuclease_NucS"/>
</dbReference>
<dbReference type="InterPro" id="IPR048301">
    <property type="entry name" value="NucS_C"/>
</dbReference>
<dbReference type="InterPro" id="IPR048302">
    <property type="entry name" value="NucS_N"/>
</dbReference>
<dbReference type="InterPro" id="IPR049173">
    <property type="entry name" value="NucS_N_sf"/>
</dbReference>
<dbReference type="InterPro" id="IPR011856">
    <property type="entry name" value="tRNA_endonuc-like_dom_sf"/>
</dbReference>
<dbReference type="NCBIfam" id="NF002876">
    <property type="entry name" value="PRK03298.1"/>
    <property type="match status" value="1"/>
</dbReference>
<dbReference type="PANTHER" id="PTHR38814">
    <property type="entry name" value="ENDONUCLEASE NUCS"/>
    <property type="match status" value="1"/>
</dbReference>
<dbReference type="PANTHER" id="PTHR38814:SF1">
    <property type="entry name" value="ENDONUCLEASE NUCS"/>
    <property type="match status" value="1"/>
</dbReference>
<dbReference type="Pfam" id="PF01939">
    <property type="entry name" value="NucS_C"/>
    <property type="match status" value="1"/>
</dbReference>
<dbReference type="Pfam" id="PF21003">
    <property type="entry name" value="NucS_N"/>
    <property type="match status" value="1"/>
</dbReference>
<reference key="1">
    <citation type="journal article" date="2006" name="Proc. Natl. Acad. Sci. U.S.A.">
        <title>The complete genome of Rhodococcus sp. RHA1 provides insights into a catabolic powerhouse.</title>
        <authorList>
            <person name="McLeod M.P."/>
            <person name="Warren R.L."/>
            <person name="Hsiao W.W.L."/>
            <person name="Araki N."/>
            <person name="Myhre M."/>
            <person name="Fernandes C."/>
            <person name="Miyazawa D."/>
            <person name="Wong W."/>
            <person name="Lillquist A.L."/>
            <person name="Wang D."/>
            <person name="Dosanjh M."/>
            <person name="Hara H."/>
            <person name="Petrescu A."/>
            <person name="Morin R.D."/>
            <person name="Yang G."/>
            <person name="Stott J.M."/>
            <person name="Schein J.E."/>
            <person name="Shin H."/>
            <person name="Smailus D."/>
            <person name="Siddiqui A.S."/>
            <person name="Marra M.A."/>
            <person name="Jones S.J.M."/>
            <person name="Holt R."/>
            <person name="Brinkman F.S.L."/>
            <person name="Miyauchi K."/>
            <person name="Fukuda M."/>
            <person name="Davies J.E."/>
            <person name="Mohn W.W."/>
            <person name="Eltis L.D."/>
        </authorList>
    </citation>
    <scope>NUCLEOTIDE SEQUENCE [LARGE SCALE GENOMIC DNA]</scope>
    <source>
        <strain>RHA1</strain>
    </source>
</reference>
<organism>
    <name type="scientific">Rhodococcus jostii (strain RHA1)</name>
    <dbReference type="NCBI Taxonomy" id="101510"/>
    <lineage>
        <taxon>Bacteria</taxon>
        <taxon>Bacillati</taxon>
        <taxon>Actinomycetota</taxon>
        <taxon>Actinomycetes</taxon>
        <taxon>Mycobacteriales</taxon>
        <taxon>Nocardiaceae</taxon>
        <taxon>Rhodococcus</taxon>
    </lineage>
</organism>
<protein>
    <recommendedName>
        <fullName evidence="1">Endonuclease NucS</fullName>
        <ecNumber evidence="1">3.1.-.-</ecNumber>
    </recommendedName>
</protein>
<proteinExistence type="inferred from homology"/>